<feature type="chain" id="PRO_0000289747" description="sn-glycerol-3-phosphate import ATP-binding protein UgpC">
    <location>
        <begin position="1"/>
        <end position="370"/>
    </location>
</feature>
<feature type="domain" description="ABC transporter" evidence="1">
    <location>
        <begin position="4"/>
        <end position="236"/>
    </location>
</feature>
<feature type="binding site" evidence="1">
    <location>
        <begin position="38"/>
        <end position="45"/>
    </location>
    <ligand>
        <name>ATP</name>
        <dbReference type="ChEBI" id="CHEBI:30616"/>
    </ligand>
</feature>
<accession>Q7NRX5</accession>
<dbReference type="EC" id="7.6.2.10" evidence="1"/>
<dbReference type="EMBL" id="AE016825">
    <property type="protein sequence ID" value="AAQ61315.1"/>
    <property type="molecule type" value="Genomic_DNA"/>
</dbReference>
<dbReference type="RefSeq" id="WP_011137200.1">
    <property type="nucleotide sequence ID" value="NC_005085.1"/>
</dbReference>
<dbReference type="SMR" id="Q7NRX5"/>
<dbReference type="STRING" id="243365.CV_3653"/>
<dbReference type="KEGG" id="cvi:CV_3653"/>
<dbReference type="eggNOG" id="COG3842">
    <property type="taxonomic scope" value="Bacteria"/>
</dbReference>
<dbReference type="HOGENOM" id="CLU_000604_1_1_4"/>
<dbReference type="OrthoDB" id="5298774at2"/>
<dbReference type="Proteomes" id="UP000001424">
    <property type="component" value="Chromosome"/>
</dbReference>
<dbReference type="GO" id="GO:0055052">
    <property type="term" value="C:ATP-binding cassette (ABC) transporter complex, substrate-binding subunit-containing"/>
    <property type="evidence" value="ECO:0007669"/>
    <property type="project" value="TreeGrafter"/>
</dbReference>
<dbReference type="GO" id="GO:0015430">
    <property type="term" value="F:ABC-type glycerol-3-phosphate transporter activity"/>
    <property type="evidence" value="ECO:0007669"/>
    <property type="project" value="UniProtKB-EC"/>
</dbReference>
<dbReference type="GO" id="GO:0005524">
    <property type="term" value="F:ATP binding"/>
    <property type="evidence" value="ECO:0007669"/>
    <property type="project" value="UniProtKB-KW"/>
</dbReference>
<dbReference type="GO" id="GO:0016887">
    <property type="term" value="F:ATP hydrolysis activity"/>
    <property type="evidence" value="ECO:0007669"/>
    <property type="project" value="InterPro"/>
</dbReference>
<dbReference type="GO" id="GO:0008643">
    <property type="term" value="P:carbohydrate transport"/>
    <property type="evidence" value="ECO:0007669"/>
    <property type="project" value="InterPro"/>
</dbReference>
<dbReference type="GO" id="GO:0001407">
    <property type="term" value="P:glycerophosphodiester transmembrane transport"/>
    <property type="evidence" value="ECO:0007669"/>
    <property type="project" value="TreeGrafter"/>
</dbReference>
<dbReference type="CDD" id="cd03301">
    <property type="entry name" value="ABC_MalK_N"/>
    <property type="match status" value="1"/>
</dbReference>
<dbReference type="FunFam" id="3.40.50.300:FF:000042">
    <property type="entry name" value="Maltose/maltodextrin ABC transporter, ATP-binding protein"/>
    <property type="match status" value="1"/>
</dbReference>
<dbReference type="Gene3D" id="2.40.50.100">
    <property type="match status" value="1"/>
</dbReference>
<dbReference type="Gene3D" id="2.40.50.140">
    <property type="entry name" value="Nucleic acid-binding proteins"/>
    <property type="match status" value="1"/>
</dbReference>
<dbReference type="Gene3D" id="3.40.50.300">
    <property type="entry name" value="P-loop containing nucleotide triphosphate hydrolases"/>
    <property type="match status" value="1"/>
</dbReference>
<dbReference type="InterPro" id="IPR003593">
    <property type="entry name" value="AAA+_ATPase"/>
</dbReference>
<dbReference type="InterPro" id="IPR003439">
    <property type="entry name" value="ABC_transporter-like_ATP-bd"/>
</dbReference>
<dbReference type="InterPro" id="IPR017871">
    <property type="entry name" value="ABC_transporter-like_CS"/>
</dbReference>
<dbReference type="InterPro" id="IPR015855">
    <property type="entry name" value="ABC_transpr_MalK-like"/>
</dbReference>
<dbReference type="InterPro" id="IPR047641">
    <property type="entry name" value="ABC_transpr_MalK/UgpC-like"/>
</dbReference>
<dbReference type="InterPro" id="IPR008995">
    <property type="entry name" value="Mo/tungstate-bd_C_term_dom"/>
</dbReference>
<dbReference type="InterPro" id="IPR012340">
    <property type="entry name" value="NA-bd_OB-fold"/>
</dbReference>
<dbReference type="InterPro" id="IPR027417">
    <property type="entry name" value="P-loop_NTPase"/>
</dbReference>
<dbReference type="InterPro" id="IPR013611">
    <property type="entry name" value="Transp-assoc_OB_typ2"/>
</dbReference>
<dbReference type="NCBIfam" id="NF008653">
    <property type="entry name" value="PRK11650.1"/>
    <property type="match status" value="1"/>
</dbReference>
<dbReference type="PANTHER" id="PTHR43875">
    <property type="entry name" value="MALTODEXTRIN IMPORT ATP-BINDING PROTEIN MSMX"/>
    <property type="match status" value="1"/>
</dbReference>
<dbReference type="PANTHER" id="PTHR43875:SF12">
    <property type="entry name" value="SN-GLYCEROL-3-PHOSPHATE IMPORT ATP-BINDING PROTEIN UGPC"/>
    <property type="match status" value="1"/>
</dbReference>
<dbReference type="Pfam" id="PF00005">
    <property type="entry name" value="ABC_tran"/>
    <property type="match status" value="1"/>
</dbReference>
<dbReference type="Pfam" id="PF08402">
    <property type="entry name" value="TOBE_2"/>
    <property type="match status" value="1"/>
</dbReference>
<dbReference type="SMART" id="SM00382">
    <property type="entry name" value="AAA"/>
    <property type="match status" value="1"/>
</dbReference>
<dbReference type="SUPFAM" id="SSF50331">
    <property type="entry name" value="MOP-like"/>
    <property type="match status" value="1"/>
</dbReference>
<dbReference type="SUPFAM" id="SSF52540">
    <property type="entry name" value="P-loop containing nucleoside triphosphate hydrolases"/>
    <property type="match status" value="1"/>
</dbReference>
<dbReference type="PROSITE" id="PS00211">
    <property type="entry name" value="ABC_TRANSPORTER_1"/>
    <property type="match status" value="1"/>
</dbReference>
<dbReference type="PROSITE" id="PS50893">
    <property type="entry name" value="ABC_TRANSPORTER_2"/>
    <property type="match status" value="1"/>
</dbReference>
<dbReference type="PROSITE" id="PS51315">
    <property type="entry name" value="UGPC"/>
    <property type="match status" value="1"/>
</dbReference>
<sequence length="370" mass="40490">MAKLSLKNIAKRYPGAERRVLEEISAEIADGEFVVIVGPSGCGKSTLLRMVAGLESTEDGEIRIGERLVNQLEPKDRDIAMVFQNYALYPHMTVAENMGYALKLKGLKKVEIMERVLKVAAVLELEQLLQRKPRELSGGQRQRVAMGRAIVREPAVFLFDEPLSNLDAKLRGQMRLEIQRLHRRLATTSLYVTHDQVEAMTLADRVIVLNKGHIEQIGAPDEIYDRPATAFVAAFMGSPGMNLFDAQADESGERLLLGDGVSLALPAANPALAGRRLKAGIRPEHLRAAGEGGETLSLRVDSLEMLGADNYVYGLLAGQNVVARLAHGHRPEPGSRLEVAVRAESLHLFDAETQRRIEHAAASQASLAVS</sequence>
<gene>
    <name evidence="1" type="primary">ugpC</name>
    <name type="ordered locus">CV_3653</name>
</gene>
<evidence type="ECO:0000255" key="1">
    <source>
        <dbReference type="HAMAP-Rule" id="MF_01727"/>
    </source>
</evidence>
<reference key="1">
    <citation type="journal article" date="2003" name="Proc. Natl. Acad. Sci. U.S.A.">
        <title>The complete genome sequence of Chromobacterium violaceum reveals remarkable and exploitable bacterial adaptability.</title>
        <authorList>
            <person name="Vasconcelos A.T.R."/>
            <person name="de Almeida D.F."/>
            <person name="Hungria M."/>
            <person name="Guimaraes C.T."/>
            <person name="Antonio R.V."/>
            <person name="Almeida F.C."/>
            <person name="de Almeida L.G.P."/>
            <person name="de Almeida R."/>
            <person name="Alves-Gomes J.A."/>
            <person name="Andrade E.M."/>
            <person name="Araripe J."/>
            <person name="de Araujo M.F.F."/>
            <person name="Astolfi-Filho S."/>
            <person name="Azevedo V."/>
            <person name="Baptista A.J."/>
            <person name="Bataus L.A.M."/>
            <person name="Batista J.S."/>
            <person name="Belo A."/>
            <person name="van den Berg C."/>
            <person name="Bogo M."/>
            <person name="Bonatto S."/>
            <person name="Bordignon J."/>
            <person name="Brigido M.M."/>
            <person name="Brito C.A."/>
            <person name="Brocchi M."/>
            <person name="Burity H.A."/>
            <person name="Camargo A.A."/>
            <person name="Cardoso D.D.P."/>
            <person name="Carneiro N.P."/>
            <person name="Carraro D.M."/>
            <person name="Carvalho C.M.B."/>
            <person name="Cascardo J.C.M."/>
            <person name="Cavada B.S."/>
            <person name="Chueire L.M.O."/>
            <person name="Creczynski-Pasa T.B."/>
            <person name="Cunha-Junior N.C."/>
            <person name="Fagundes N."/>
            <person name="Falcao C.L."/>
            <person name="Fantinatti F."/>
            <person name="Farias I.P."/>
            <person name="Felipe M.S.S."/>
            <person name="Ferrari L.P."/>
            <person name="Ferro J.A."/>
            <person name="Ferro M.I.T."/>
            <person name="Franco G.R."/>
            <person name="Freitas N.S.A."/>
            <person name="Furlan L.R."/>
            <person name="Gazzinelli R.T."/>
            <person name="Gomes E.A."/>
            <person name="Goncalves P.R."/>
            <person name="Grangeiro T.B."/>
            <person name="Grattapaglia D."/>
            <person name="Grisard E.C."/>
            <person name="Hanna E.S."/>
            <person name="Jardim S.N."/>
            <person name="Laurino J."/>
            <person name="Leoi L.C.T."/>
            <person name="Lima L.F.A."/>
            <person name="Loureiro M.F."/>
            <person name="Lyra M.C.C.P."/>
            <person name="Madeira H.M.F."/>
            <person name="Manfio G.P."/>
            <person name="Maranhao A.Q."/>
            <person name="Martins W.S."/>
            <person name="di Mauro S.M.Z."/>
            <person name="de Medeiros S.R.B."/>
            <person name="Meissner R.V."/>
            <person name="Moreira M.A.M."/>
            <person name="Nascimento F.F."/>
            <person name="Nicolas M.F."/>
            <person name="Oliveira J.G."/>
            <person name="Oliveira S.C."/>
            <person name="Paixao R.F.C."/>
            <person name="Parente J.A."/>
            <person name="Pedrosa F.O."/>
            <person name="Pena S.D.J."/>
            <person name="Pereira J.O."/>
            <person name="Pereira M."/>
            <person name="Pinto L.S.R.C."/>
            <person name="Pinto L.S."/>
            <person name="Porto J.I.R."/>
            <person name="Potrich D.P."/>
            <person name="Ramalho-Neto C.E."/>
            <person name="Reis A.M.M."/>
            <person name="Rigo L.U."/>
            <person name="Rondinelli E."/>
            <person name="Santos E.B.P."/>
            <person name="Santos F.R."/>
            <person name="Schneider M.P.C."/>
            <person name="Seuanez H.N."/>
            <person name="Silva A.M.R."/>
            <person name="da Silva A.L.C."/>
            <person name="Silva D.W."/>
            <person name="Silva R."/>
            <person name="Simoes I.C."/>
            <person name="Simon D."/>
            <person name="Soares C.M.A."/>
            <person name="Soares R.B.A."/>
            <person name="Souza E.M."/>
            <person name="Souza K.R.L."/>
            <person name="Souza R.C."/>
            <person name="Steffens M.B.R."/>
            <person name="Steindel M."/>
            <person name="Teixeira S.R."/>
            <person name="Urmenyi T."/>
            <person name="Vettore A."/>
            <person name="Wassem R."/>
            <person name="Zaha A."/>
            <person name="Simpson A.J.G."/>
        </authorList>
    </citation>
    <scope>NUCLEOTIDE SEQUENCE [LARGE SCALE GENOMIC DNA]</scope>
    <source>
        <strain>ATCC 12472 / DSM 30191 / JCM 1249 / CCUG 213 / NBRC 12614 / NCIMB 9131 / NCTC 9757 / MK</strain>
    </source>
</reference>
<comment type="function">
    <text evidence="1">Part of the ABC transporter complex UgpBAEC involved in sn-glycerol-3-phosphate (G3P) import. Responsible for energy coupling to the transport system.</text>
</comment>
<comment type="catalytic activity">
    <reaction evidence="1">
        <text>sn-glycerol 3-phosphate(out) + ATP + H2O = sn-glycerol 3-phosphate(in) + ADP + phosphate + H(+)</text>
        <dbReference type="Rhea" id="RHEA:21668"/>
        <dbReference type="ChEBI" id="CHEBI:15377"/>
        <dbReference type="ChEBI" id="CHEBI:15378"/>
        <dbReference type="ChEBI" id="CHEBI:30616"/>
        <dbReference type="ChEBI" id="CHEBI:43474"/>
        <dbReference type="ChEBI" id="CHEBI:57597"/>
        <dbReference type="ChEBI" id="CHEBI:456216"/>
        <dbReference type="EC" id="7.6.2.10"/>
    </reaction>
</comment>
<comment type="subunit">
    <text evidence="1">The complex is composed of two ATP-binding proteins (UgpC), two transmembrane proteins (UgpA and UgpE) and a solute-binding protein (UgpB).</text>
</comment>
<comment type="subcellular location">
    <subcellularLocation>
        <location evidence="1">Cell inner membrane</location>
        <topology evidence="1">Peripheral membrane protein</topology>
    </subcellularLocation>
</comment>
<comment type="similarity">
    <text evidence="1">Belongs to the ABC transporter superfamily. sn-glycerol-3-phosphate importer (TC 3.A.1.1.3) family.</text>
</comment>
<name>UGPC_CHRVO</name>
<keyword id="KW-0067">ATP-binding</keyword>
<keyword id="KW-0997">Cell inner membrane</keyword>
<keyword id="KW-1003">Cell membrane</keyword>
<keyword id="KW-0472">Membrane</keyword>
<keyword id="KW-0547">Nucleotide-binding</keyword>
<keyword id="KW-1185">Reference proteome</keyword>
<keyword id="KW-0762">Sugar transport</keyword>
<keyword id="KW-1278">Translocase</keyword>
<keyword id="KW-0813">Transport</keyword>
<organism>
    <name type="scientific">Chromobacterium violaceum (strain ATCC 12472 / DSM 30191 / JCM 1249 / CCUG 213 / NBRC 12614 / NCIMB 9131 / NCTC 9757 / MK)</name>
    <dbReference type="NCBI Taxonomy" id="243365"/>
    <lineage>
        <taxon>Bacteria</taxon>
        <taxon>Pseudomonadati</taxon>
        <taxon>Pseudomonadota</taxon>
        <taxon>Betaproteobacteria</taxon>
        <taxon>Neisseriales</taxon>
        <taxon>Chromobacteriaceae</taxon>
        <taxon>Chromobacterium</taxon>
    </lineage>
</organism>
<proteinExistence type="inferred from homology"/>
<protein>
    <recommendedName>
        <fullName evidence="1">sn-glycerol-3-phosphate import ATP-binding protein UgpC</fullName>
        <ecNumber evidence="1">7.6.2.10</ecNumber>
    </recommendedName>
</protein>